<name>E4PD_AERS4</name>
<comment type="function">
    <text evidence="1">Catalyzes the NAD-dependent conversion of D-erythrose 4-phosphate to 4-phosphoerythronate.</text>
</comment>
<comment type="catalytic activity">
    <reaction evidence="1">
        <text>D-erythrose 4-phosphate + NAD(+) + H2O = 4-phospho-D-erythronate + NADH + 2 H(+)</text>
        <dbReference type="Rhea" id="RHEA:12056"/>
        <dbReference type="ChEBI" id="CHEBI:15377"/>
        <dbReference type="ChEBI" id="CHEBI:15378"/>
        <dbReference type="ChEBI" id="CHEBI:16897"/>
        <dbReference type="ChEBI" id="CHEBI:57540"/>
        <dbReference type="ChEBI" id="CHEBI:57945"/>
        <dbReference type="ChEBI" id="CHEBI:58766"/>
        <dbReference type="EC" id="1.2.1.72"/>
    </reaction>
</comment>
<comment type="pathway">
    <text evidence="1">Cofactor biosynthesis; pyridoxine 5'-phosphate biosynthesis; pyridoxine 5'-phosphate from D-erythrose 4-phosphate: step 1/5.</text>
</comment>
<comment type="subunit">
    <text evidence="1">Homotetramer.</text>
</comment>
<comment type="subcellular location">
    <subcellularLocation>
        <location evidence="1">Cytoplasm</location>
    </subcellularLocation>
</comment>
<comment type="similarity">
    <text evidence="1">Belongs to the glyceraldehyde-3-phosphate dehydrogenase family. Epd subfamily.</text>
</comment>
<organism>
    <name type="scientific">Aeromonas salmonicida (strain A449)</name>
    <dbReference type="NCBI Taxonomy" id="382245"/>
    <lineage>
        <taxon>Bacteria</taxon>
        <taxon>Pseudomonadati</taxon>
        <taxon>Pseudomonadota</taxon>
        <taxon>Gammaproteobacteria</taxon>
        <taxon>Aeromonadales</taxon>
        <taxon>Aeromonadaceae</taxon>
        <taxon>Aeromonas</taxon>
    </lineage>
</organism>
<feature type="chain" id="PRO_0000293144" description="D-erythrose-4-phosphate dehydrogenase">
    <location>
        <begin position="1"/>
        <end position="336"/>
    </location>
</feature>
<feature type="active site" description="Nucleophile" evidence="1">
    <location>
        <position position="154"/>
    </location>
</feature>
<feature type="binding site" evidence="1">
    <location>
        <begin position="11"/>
        <end position="12"/>
    </location>
    <ligand>
        <name>NAD(+)</name>
        <dbReference type="ChEBI" id="CHEBI:57540"/>
    </ligand>
</feature>
<feature type="binding site" evidence="1">
    <location>
        <begin position="153"/>
        <end position="155"/>
    </location>
    <ligand>
        <name>substrate</name>
    </ligand>
</feature>
<feature type="binding site" evidence="1">
    <location>
        <position position="199"/>
    </location>
    <ligand>
        <name>substrate</name>
    </ligand>
</feature>
<feature type="binding site" evidence="1">
    <location>
        <begin position="212"/>
        <end position="213"/>
    </location>
    <ligand>
        <name>substrate</name>
    </ligand>
</feature>
<feature type="binding site" evidence="1">
    <location>
        <position position="235"/>
    </location>
    <ligand>
        <name>substrate</name>
    </ligand>
</feature>
<feature type="binding site" evidence="1">
    <location>
        <position position="317"/>
    </location>
    <ligand>
        <name>NAD(+)</name>
        <dbReference type="ChEBI" id="CHEBI:57540"/>
    </ligand>
</feature>
<feature type="site" description="Activates thiol group during catalysis" evidence="1">
    <location>
        <position position="181"/>
    </location>
</feature>
<proteinExistence type="inferred from homology"/>
<accession>A4SRF2</accession>
<protein>
    <recommendedName>
        <fullName evidence="1">D-erythrose-4-phosphate dehydrogenase</fullName>
        <shortName evidence="1">E4PDH</shortName>
        <ecNumber evidence="1">1.2.1.72</ecNumber>
    </recommendedName>
</protein>
<evidence type="ECO:0000255" key="1">
    <source>
        <dbReference type="HAMAP-Rule" id="MF_01640"/>
    </source>
</evidence>
<dbReference type="EC" id="1.2.1.72" evidence="1"/>
<dbReference type="EMBL" id="CP000644">
    <property type="protein sequence ID" value="ABO91474.1"/>
    <property type="molecule type" value="Genomic_DNA"/>
</dbReference>
<dbReference type="RefSeq" id="WP_005318807.1">
    <property type="nucleotide sequence ID" value="NC_009348.1"/>
</dbReference>
<dbReference type="SMR" id="A4SRF2"/>
<dbReference type="STRING" id="29491.GCA_000820065_02052"/>
<dbReference type="KEGG" id="asa:ASA_3506"/>
<dbReference type="eggNOG" id="COG0057">
    <property type="taxonomic scope" value="Bacteria"/>
</dbReference>
<dbReference type="HOGENOM" id="CLU_030140_0_0_6"/>
<dbReference type="UniPathway" id="UPA00244">
    <property type="reaction ID" value="UER00309"/>
</dbReference>
<dbReference type="Proteomes" id="UP000000225">
    <property type="component" value="Chromosome"/>
</dbReference>
<dbReference type="GO" id="GO:0005737">
    <property type="term" value="C:cytoplasm"/>
    <property type="evidence" value="ECO:0007669"/>
    <property type="project" value="UniProtKB-SubCell"/>
</dbReference>
<dbReference type="GO" id="GO:0048001">
    <property type="term" value="F:erythrose-4-phosphate dehydrogenase activity"/>
    <property type="evidence" value="ECO:0007669"/>
    <property type="project" value="UniProtKB-UniRule"/>
</dbReference>
<dbReference type="GO" id="GO:0051287">
    <property type="term" value="F:NAD binding"/>
    <property type="evidence" value="ECO:0007669"/>
    <property type="project" value="InterPro"/>
</dbReference>
<dbReference type="GO" id="GO:0042823">
    <property type="term" value="P:pyridoxal phosphate biosynthetic process"/>
    <property type="evidence" value="ECO:0007669"/>
    <property type="project" value="UniProtKB-UniRule"/>
</dbReference>
<dbReference type="GO" id="GO:0008615">
    <property type="term" value="P:pyridoxine biosynthetic process"/>
    <property type="evidence" value="ECO:0007669"/>
    <property type="project" value="UniProtKB-UniRule"/>
</dbReference>
<dbReference type="CDD" id="cd23937">
    <property type="entry name" value="GAPDH_C_E4PDH"/>
    <property type="match status" value="1"/>
</dbReference>
<dbReference type="CDD" id="cd17892">
    <property type="entry name" value="GAPDH_N_E4PDH"/>
    <property type="match status" value="1"/>
</dbReference>
<dbReference type="FunFam" id="3.30.360.10:FF:000007">
    <property type="entry name" value="D-erythrose-4-phosphate dehydrogenase"/>
    <property type="match status" value="1"/>
</dbReference>
<dbReference type="FunFam" id="3.40.50.720:FF:000001">
    <property type="entry name" value="Glyceraldehyde-3-phosphate dehydrogenase"/>
    <property type="match status" value="1"/>
</dbReference>
<dbReference type="Gene3D" id="3.30.360.10">
    <property type="entry name" value="Dihydrodipicolinate Reductase, domain 2"/>
    <property type="match status" value="1"/>
</dbReference>
<dbReference type="Gene3D" id="3.40.50.720">
    <property type="entry name" value="NAD(P)-binding Rossmann-like Domain"/>
    <property type="match status" value="1"/>
</dbReference>
<dbReference type="HAMAP" id="MF_01640">
    <property type="entry name" value="E4P_dehydrog"/>
    <property type="match status" value="1"/>
</dbReference>
<dbReference type="InterPro" id="IPR006422">
    <property type="entry name" value="E4P_DH_bac"/>
</dbReference>
<dbReference type="InterPro" id="IPR020831">
    <property type="entry name" value="GlycerAld/Erythrose_P_DH"/>
</dbReference>
<dbReference type="InterPro" id="IPR020829">
    <property type="entry name" value="GlycerAld_3-P_DH_cat"/>
</dbReference>
<dbReference type="InterPro" id="IPR020828">
    <property type="entry name" value="GlycerAld_3-P_DH_NAD(P)-bd"/>
</dbReference>
<dbReference type="InterPro" id="IPR036291">
    <property type="entry name" value="NAD(P)-bd_dom_sf"/>
</dbReference>
<dbReference type="NCBIfam" id="TIGR01532">
    <property type="entry name" value="E4PD_g-proteo"/>
    <property type="match status" value="1"/>
</dbReference>
<dbReference type="NCBIfam" id="NF010058">
    <property type="entry name" value="PRK13535.1"/>
    <property type="match status" value="1"/>
</dbReference>
<dbReference type="PANTHER" id="PTHR43148">
    <property type="entry name" value="GLYCERALDEHYDE-3-PHOSPHATE DEHYDROGENASE 2"/>
    <property type="match status" value="1"/>
</dbReference>
<dbReference type="Pfam" id="PF02800">
    <property type="entry name" value="Gp_dh_C"/>
    <property type="match status" value="1"/>
</dbReference>
<dbReference type="Pfam" id="PF00044">
    <property type="entry name" value="Gp_dh_N"/>
    <property type="match status" value="1"/>
</dbReference>
<dbReference type="PIRSF" id="PIRSF000149">
    <property type="entry name" value="GAP_DH"/>
    <property type="match status" value="1"/>
</dbReference>
<dbReference type="PRINTS" id="PR00078">
    <property type="entry name" value="G3PDHDRGNASE"/>
</dbReference>
<dbReference type="SMART" id="SM00846">
    <property type="entry name" value="Gp_dh_N"/>
    <property type="match status" value="1"/>
</dbReference>
<dbReference type="SUPFAM" id="SSF55347">
    <property type="entry name" value="Glyceraldehyde-3-phosphate dehydrogenase-like, C-terminal domain"/>
    <property type="match status" value="1"/>
</dbReference>
<dbReference type="SUPFAM" id="SSF51735">
    <property type="entry name" value="NAD(P)-binding Rossmann-fold domains"/>
    <property type="match status" value="1"/>
</dbReference>
<reference key="1">
    <citation type="journal article" date="2008" name="BMC Genomics">
        <title>The genome of Aeromonas salmonicida subsp. salmonicida A449: insights into the evolution of a fish pathogen.</title>
        <authorList>
            <person name="Reith M.E."/>
            <person name="Singh R.K."/>
            <person name="Curtis B."/>
            <person name="Boyd J.M."/>
            <person name="Bouevitch A."/>
            <person name="Kimball J."/>
            <person name="Munholland J."/>
            <person name="Murphy C."/>
            <person name="Sarty D."/>
            <person name="Williams J."/>
            <person name="Nash J.H."/>
            <person name="Johnson S.C."/>
            <person name="Brown L.L."/>
        </authorList>
    </citation>
    <scope>NUCLEOTIDE SEQUENCE [LARGE SCALE GENOMIC DNA]</scope>
    <source>
        <strain>A449</strain>
    </source>
</reference>
<keyword id="KW-0963">Cytoplasm</keyword>
<keyword id="KW-0520">NAD</keyword>
<keyword id="KW-0560">Oxidoreductase</keyword>
<keyword id="KW-0664">Pyridoxine biosynthesis</keyword>
<sequence length="336" mass="36786">MIKIAINGYGRIGRNVLRALYESGRDKNIKIVAINELAAPEAMVHLTRFDTSHGRFRYPVQLAGHSMLVGEDLISLFAEQDPANLPWRALGVDVVLDCTGVFGSRADAELHLGAGAGKVLFSHPADADVDATIVYGVNHQVLTGRERIVSNASCTTNCVVPVIETLHREFEINCGTITTIHSAMHDQQVIDAYHSDLRRTRAASQSIIPVDTKLAKGLERILPHFAGKFEAIAVRVPTINVTAMDLSITVRKKVTVTDVNQALQRASRGTLSGILDYTEEPLVSVDFNHDAHSCIIDGTQTRVSDANLVKMLMWCDNEWGFANRMLDTTRAMMAAG</sequence>
<gene>
    <name evidence="1" type="primary">epd</name>
    <name type="ordered locus">ASA_3506</name>
</gene>